<comment type="function">
    <text evidence="1">Part of the twin-arginine translocation (Tat) system that transports large folded proteins containing a characteristic twin-arginine motif in their signal peptide across membranes. Together with TatC, TatB is part of a receptor directly interacting with Tat signal peptides. TatB may form an oligomeric binding site that transiently accommodates folded Tat precursor proteins before their translocation.</text>
</comment>
<comment type="subunit">
    <text evidence="1">The Tat system comprises two distinct complexes: a TatABC complex, containing multiple copies of TatA, TatB and TatC subunits, and a separate TatA complex, containing only TatA subunits. Substrates initially bind to the TatABC complex, which probably triggers association of the separate TatA complex to form the active translocon.</text>
</comment>
<comment type="subcellular location">
    <subcellularLocation>
        <location evidence="1">Cell inner membrane</location>
        <topology evidence="1">Single-pass membrane protein</topology>
    </subcellularLocation>
</comment>
<comment type="similarity">
    <text evidence="1">Belongs to the TatB family.</text>
</comment>
<reference key="1">
    <citation type="journal article" date="2000" name="Nature">
        <title>Complete DNA sequence of a serogroup A strain of Neisseria meningitidis Z2491.</title>
        <authorList>
            <person name="Parkhill J."/>
            <person name="Achtman M."/>
            <person name="James K.D."/>
            <person name="Bentley S.D."/>
            <person name="Churcher C.M."/>
            <person name="Klee S.R."/>
            <person name="Morelli G."/>
            <person name="Basham D."/>
            <person name="Brown D."/>
            <person name="Chillingworth T."/>
            <person name="Davies R.M."/>
            <person name="Davis P."/>
            <person name="Devlin K."/>
            <person name="Feltwell T."/>
            <person name="Hamlin N."/>
            <person name="Holroyd S."/>
            <person name="Jagels K."/>
            <person name="Leather S."/>
            <person name="Moule S."/>
            <person name="Mungall K.L."/>
            <person name="Quail M.A."/>
            <person name="Rajandream M.A."/>
            <person name="Rutherford K.M."/>
            <person name="Simmonds M."/>
            <person name="Skelton J."/>
            <person name="Whitehead S."/>
            <person name="Spratt B.G."/>
            <person name="Barrell B.G."/>
        </authorList>
    </citation>
    <scope>NUCLEOTIDE SEQUENCE [LARGE SCALE GENOMIC DNA]</scope>
    <source>
        <strain>DSM 15465 / Z2491</strain>
    </source>
</reference>
<sequence length="228" mass="25036">MFDFGLGELVFVGIIALIVLGPERLPEAARTAGRLIGRLQRFVGSVKQEFDTQIELEELRKAKQEFEAAAAQVRDSLKETGTDMEGNLHDISDGLKPWEKLPEQRTPADFGVDENGNPFPDAANTLLDGISDVMPSERSYASAETLGDSGQTGSTAEPAETDQDRAWREYLTASAAAPVVQTVEVSYIDTAVETPVPHTTSLRKQAISRKRDLRPKSRAKPKLRVRKS</sequence>
<evidence type="ECO:0000255" key="1">
    <source>
        <dbReference type="HAMAP-Rule" id="MF_00237"/>
    </source>
</evidence>
<evidence type="ECO:0000256" key="2">
    <source>
        <dbReference type="SAM" id="MobiDB-lite"/>
    </source>
</evidence>
<dbReference type="EMBL" id="AL157959">
    <property type="protein sequence ID" value="CAM08049.1"/>
    <property type="molecule type" value="Genomic_DNA"/>
</dbReference>
<dbReference type="PIR" id="D81925">
    <property type="entry name" value="D81925"/>
</dbReference>
<dbReference type="RefSeq" id="WP_002236783.1">
    <property type="nucleotide sequence ID" value="NC_003116.1"/>
</dbReference>
<dbReference type="SMR" id="Q9JVK1"/>
<dbReference type="DNASU" id="906794"/>
<dbReference type="EnsemblBacteria" id="CAM08049">
    <property type="protein sequence ID" value="CAM08049"/>
    <property type="gene ID" value="NMA0804"/>
</dbReference>
<dbReference type="GeneID" id="93386570"/>
<dbReference type="KEGG" id="nma:NMA0804"/>
<dbReference type="HOGENOM" id="CLU_086034_1_1_4"/>
<dbReference type="Proteomes" id="UP000000626">
    <property type="component" value="Chromosome"/>
</dbReference>
<dbReference type="GO" id="GO:0033281">
    <property type="term" value="C:TAT protein transport complex"/>
    <property type="evidence" value="ECO:0007669"/>
    <property type="project" value="UniProtKB-UniRule"/>
</dbReference>
<dbReference type="GO" id="GO:0008320">
    <property type="term" value="F:protein transmembrane transporter activity"/>
    <property type="evidence" value="ECO:0007669"/>
    <property type="project" value="UniProtKB-UniRule"/>
</dbReference>
<dbReference type="GO" id="GO:0043953">
    <property type="term" value="P:protein transport by the Tat complex"/>
    <property type="evidence" value="ECO:0007669"/>
    <property type="project" value="UniProtKB-UniRule"/>
</dbReference>
<dbReference type="Gene3D" id="1.20.5.3310">
    <property type="match status" value="1"/>
</dbReference>
<dbReference type="HAMAP" id="MF_00237">
    <property type="entry name" value="TatB"/>
    <property type="match status" value="1"/>
</dbReference>
<dbReference type="InterPro" id="IPR003369">
    <property type="entry name" value="TatA/B/E"/>
</dbReference>
<dbReference type="InterPro" id="IPR018448">
    <property type="entry name" value="TatB"/>
</dbReference>
<dbReference type="NCBIfam" id="TIGR01410">
    <property type="entry name" value="tatB"/>
    <property type="match status" value="1"/>
</dbReference>
<dbReference type="PANTHER" id="PTHR33162">
    <property type="entry name" value="SEC-INDEPENDENT PROTEIN TRANSLOCASE PROTEIN TATA, CHLOROPLASTIC"/>
    <property type="match status" value="1"/>
</dbReference>
<dbReference type="PANTHER" id="PTHR33162:SF1">
    <property type="entry name" value="SEC-INDEPENDENT PROTEIN TRANSLOCASE PROTEIN TATA, CHLOROPLASTIC"/>
    <property type="match status" value="1"/>
</dbReference>
<dbReference type="Pfam" id="PF02416">
    <property type="entry name" value="TatA_B_E"/>
    <property type="match status" value="1"/>
</dbReference>
<dbReference type="PRINTS" id="PR01506">
    <property type="entry name" value="TATBPROTEIN"/>
</dbReference>
<organism>
    <name type="scientific">Neisseria meningitidis serogroup A / serotype 4A (strain DSM 15465 / Z2491)</name>
    <dbReference type="NCBI Taxonomy" id="122587"/>
    <lineage>
        <taxon>Bacteria</taxon>
        <taxon>Pseudomonadati</taxon>
        <taxon>Pseudomonadota</taxon>
        <taxon>Betaproteobacteria</taxon>
        <taxon>Neisseriales</taxon>
        <taxon>Neisseriaceae</taxon>
        <taxon>Neisseria</taxon>
    </lineage>
</organism>
<protein>
    <recommendedName>
        <fullName evidence="1">Sec-independent protein translocase protein TatB</fullName>
    </recommendedName>
</protein>
<name>TATB_NEIMA</name>
<feature type="chain" id="PRO_0000192662" description="Sec-independent protein translocase protein TatB">
    <location>
        <begin position="1"/>
        <end position="228"/>
    </location>
</feature>
<feature type="transmembrane region" description="Helical" evidence="1">
    <location>
        <begin position="1"/>
        <end position="21"/>
    </location>
</feature>
<feature type="region of interest" description="Disordered" evidence="2">
    <location>
        <begin position="138"/>
        <end position="162"/>
    </location>
</feature>
<feature type="region of interest" description="Disordered" evidence="2">
    <location>
        <begin position="195"/>
        <end position="228"/>
    </location>
</feature>
<feature type="compositionally biased region" description="Basic residues" evidence="2">
    <location>
        <begin position="206"/>
        <end position="228"/>
    </location>
</feature>
<accession>Q9JVK1</accession>
<accession>A1IQL7</accession>
<keyword id="KW-0997">Cell inner membrane</keyword>
<keyword id="KW-1003">Cell membrane</keyword>
<keyword id="KW-0472">Membrane</keyword>
<keyword id="KW-0653">Protein transport</keyword>
<keyword id="KW-0811">Translocation</keyword>
<keyword id="KW-0812">Transmembrane</keyword>
<keyword id="KW-1133">Transmembrane helix</keyword>
<keyword id="KW-0813">Transport</keyword>
<proteinExistence type="inferred from homology"/>
<gene>
    <name evidence="1" type="primary">tatB</name>
    <name type="ordered locus">NMA0804</name>
</gene>